<reference key="1">
    <citation type="submission" date="2008-05" db="EMBL/GenBank/DDBJ databases">
        <title>Genome sequence of Helicobacter pylori from the remote Amazon: traces of Asian ancestry of the first Americans.</title>
        <authorList>
            <person name="Kersulyte D."/>
            <person name="Kalia A."/>
            <person name="Gilman R.H."/>
            <person name="Berg D.E."/>
        </authorList>
    </citation>
    <scope>NUCLEOTIDE SEQUENCE [LARGE SCALE GENOMIC DNA]</scope>
    <source>
        <strain>Shi470</strain>
    </source>
</reference>
<keyword id="KW-0210">Decarboxylase</keyword>
<keyword id="KW-0456">Lyase</keyword>
<keyword id="KW-0665">Pyrimidine biosynthesis</keyword>
<dbReference type="EC" id="4.1.1.23" evidence="1"/>
<dbReference type="EMBL" id="CP001072">
    <property type="protein sequence ID" value="ACD47474.1"/>
    <property type="molecule type" value="Genomic_DNA"/>
</dbReference>
<dbReference type="RefSeq" id="WP_001175355.1">
    <property type="nucleotide sequence ID" value="NC_010698.2"/>
</dbReference>
<dbReference type="SMR" id="B2UW09"/>
<dbReference type="KEGG" id="hps:HPSH_00025"/>
<dbReference type="HOGENOM" id="CLU_067069_1_1_7"/>
<dbReference type="UniPathway" id="UPA00070">
    <property type="reaction ID" value="UER00120"/>
</dbReference>
<dbReference type="GO" id="GO:0005829">
    <property type="term" value="C:cytosol"/>
    <property type="evidence" value="ECO:0007669"/>
    <property type="project" value="TreeGrafter"/>
</dbReference>
<dbReference type="GO" id="GO:0004590">
    <property type="term" value="F:orotidine-5'-phosphate decarboxylase activity"/>
    <property type="evidence" value="ECO:0007669"/>
    <property type="project" value="UniProtKB-UniRule"/>
</dbReference>
<dbReference type="GO" id="GO:0006207">
    <property type="term" value="P:'de novo' pyrimidine nucleobase biosynthetic process"/>
    <property type="evidence" value="ECO:0007669"/>
    <property type="project" value="InterPro"/>
</dbReference>
<dbReference type="GO" id="GO:0044205">
    <property type="term" value="P:'de novo' UMP biosynthetic process"/>
    <property type="evidence" value="ECO:0007669"/>
    <property type="project" value="UniProtKB-UniRule"/>
</dbReference>
<dbReference type="CDD" id="cd04725">
    <property type="entry name" value="OMP_decarboxylase_like"/>
    <property type="match status" value="1"/>
</dbReference>
<dbReference type="Gene3D" id="3.20.20.70">
    <property type="entry name" value="Aldolase class I"/>
    <property type="match status" value="1"/>
</dbReference>
<dbReference type="HAMAP" id="MF_01200_B">
    <property type="entry name" value="OMPdecase_type1_B"/>
    <property type="match status" value="1"/>
</dbReference>
<dbReference type="InterPro" id="IPR013785">
    <property type="entry name" value="Aldolase_TIM"/>
</dbReference>
<dbReference type="InterPro" id="IPR014732">
    <property type="entry name" value="OMPdecase"/>
</dbReference>
<dbReference type="InterPro" id="IPR018089">
    <property type="entry name" value="OMPdecase_AS"/>
</dbReference>
<dbReference type="InterPro" id="IPR047596">
    <property type="entry name" value="OMPdecase_bac"/>
</dbReference>
<dbReference type="InterPro" id="IPR001754">
    <property type="entry name" value="OMPdeCOase_dom"/>
</dbReference>
<dbReference type="InterPro" id="IPR011060">
    <property type="entry name" value="RibuloseP-bd_barrel"/>
</dbReference>
<dbReference type="NCBIfam" id="NF001273">
    <property type="entry name" value="PRK00230.1"/>
    <property type="match status" value="1"/>
</dbReference>
<dbReference type="NCBIfam" id="TIGR01740">
    <property type="entry name" value="pyrF"/>
    <property type="match status" value="1"/>
</dbReference>
<dbReference type="PANTHER" id="PTHR32119">
    <property type="entry name" value="OROTIDINE 5'-PHOSPHATE DECARBOXYLASE"/>
    <property type="match status" value="1"/>
</dbReference>
<dbReference type="PANTHER" id="PTHR32119:SF2">
    <property type="entry name" value="OROTIDINE 5'-PHOSPHATE DECARBOXYLASE"/>
    <property type="match status" value="1"/>
</dbReference>
<dbReference type="Pfam" id="PF00215">
    <property type="entry name" value="OMPdecase"/>
    <property type="match status" value="1"/>
</dbReference>
<dbReference type="SMART" id="SM00934">
    <property type="entry name" value="OMPdecase"/>
    <property type="match status" value="1"/>
</dbReference>
<dbReference type="SUPFAM" id="SSF51366">
    <property type="entry name" value="Ribulose-phoshate binding barrel"/>
    <property type="match status" value="1"/>
</dbReference>
<dbReference type="PROSITE" id="PS00156">
    <property type="entry name" value="OMPDECASE"/>
    <property type="match status" value="1"/>
</dbReference>
<gene>
    <name evidence="1" type="primary">pyrF</name>
    <name type="ordered locus">HPSH_00025</name>
</gene>
<name>PYRF_HELPS</name>
<feature type="chain" id="PRO_1000138534" description="Orotidine 5'-phosphate decarboxylase">
    <location>
        <begin position="1"/>
        <end position="227"/>
    </location>
</feature>
<feature type="active site" description="Proton donor" evidence="1">
    <location>
        <position position="61"/>
    </location>
</feature>
<feature type="binding site" evidence="1">
    <location>
        <position position="8"/>
    </location>
    <ligand>
        <name>substrate</name>
    </ligand>
</feature>
<feature type="binding site" evidence="1">
    <location>
        <position position="30"/>
    </location>
    <ligand>
        <name>substrate</name>
    </ligand>
</feature>
<feature type="binding site" evidence="1">
    <location>
        <begin position="59"/>
        <end position="68"/>
    </location>
    <ligand>
        <name>substrate</name>
    </ligand>
</feature>
<feature type="binding site" evidence="1">
    <location>
        <position position="118"/>
    </location>
    <ligand>
        <name>substrate</name>
    </ligand>
</feature>
<feature type="binding site" evidence="1">
    <location>
        <position position="178"/>
    </location>
    <ligand>
        <name>substrate</name>
    </ligand>
</feature>
<feature type="binding site" evidence="1">
    <location>
        <position position="187"/>
    </location>
    <ligand>
        <name>substrate</name>
    </ligand>
</feature>
<feature type="binding site" evidence="1">
    <location>
        <position position="207"/>
    </location>
    <ligand>
        <name>substrate</name>
    </ligand>
</feature>
<feature type="binding site" evidence="1">
    <location>
        <position position="208"/>
    </location>
    <ligand>
        <name>substrate</name>
    </ligand>
</feature>
<organism>
    <name type="scientific">Helicobacter pylori (strain Shi470)</name>
    <dbReference type="NCBI Taxonomy" id="512562"/>
    <lineage>
        <taxon>Bacteria</taxon>
        <taxon>Pseudomonadati</taxon>
        <taxon>Campylobacterota</taxon>
        <taxon>Epsilonproteobacteria</taxon>
        <taxon>Campylobacterales</taxon>
        <taxon>Helicobacteraceae</taxon>
        <taxon>Helicobacter</taxon>
    </lineage>
</organism>
<comment type="function">
    <text evidence="1">Catalyzes the decarboxylation of orotidine 5'-monophosphate (OMP) to uridine 5'-monophosphate (UMP).</text>
</comment>
<comment type="catalytic activity">
    <reaction evidence="1">
        <text>orotidine 5'-phosphate + H(+) = UMP + CO2</text>
        <dbReference type="Rhea" id="RHEA:11596"/>
        <dbReference type="ChEBI" id="CHEBI:15378"/>
        <dbReference type="ChEBI" id="CHEBI:16526"/>
        <dbReference type="ChEBI" id="CHEBI:57538"/>
        <dbReference type="ChEBI" id="CHEBI:57865"/>
        <dbReference type="EC" id="4.1.1.23"/>
    </reaction>
</comment>
<comment type="pathway">
    <text evidence="1">Pyrimidine metabolism; UMP biosynthesis via de novo pathway; UMP from orotate: step 2/2.</text>
</comment>
<comment type="subunit">
    <text evidence="1">Homodimer.</text>
</comment>
<comment type="similarity">
    <text evidence="1">Belongs to the OMP decarboxylase family. Type 1 subfamily.</text>
</comment>
<proteinExistence type="inferred from homology"/>
<accession>B2UW09</accession>
<protein>
    <recommendedName>
        <fullName evidence="1">Orotidine 5'-phosphate decarboxylase</fullName>
        <ecNumber evidence="1">4.1.1.23</ecNumber>
    </recommendedName>
    <alternativeName>
        <fullName evidence="1">OMP decarboxylase</fullName>
        <shortName evidence="1">OMPDCase</shortName>
        <shortName evidence="1">OMPdecase</shortName>
    </alternativeName>
</protein>
<evidence type="ECO:0000255" key="1">
    <source>
        <dbReference type="HAMAP-Rule" id="MF_01200"/>
    </source>
</evidence>
<sequence length="227" mass="25337">MQLCVALDLEKKEDNLSLLQELKGLDLWAKVGLRSFIRDGAVFLDEIRKIDGNFKIFLDLKLYDIPYTMANAALECAKLEVDMLTVHLSSAKSALTILMQRLNALKKRPLIMGVSALTSFSEEEFLSVYNAPLKTQAIKLSVMGKESGIDGVVCSVFESLAIKEALGKDFLTLTPGIRLNKNDKEDQERVANAKEAKQNLSDFIVVGRPIYQAKEPREVVLELLKDC</sequence>